<gene>
    <name type="ORF">64</name>
</gene>
<dbReference type="EMBL" id="AJ414696">
    <property type="protein sequence ID" value="CAC93977.1"/>
    <property type="molecule type" value="Genomic_DNA"/>
</dbReference>
<dbReference type="EMBL" id="AJ748296">
    <property type="protein sequence ID" value="CAG38841.1"/>
    <property type="molecule type" value="Genomic_DNA"/>
</dbReference>
<dbReference type="RefSeq" id="NP_666610.1">
    <property type="nucleotide sequence ID" value="NC_004087.1"/>
</dbReference>
<dbReference type="SMR" id="Q8QL33"/>
<dbReference type="KEGG" id="vg:951361"/>
<dbReference type="OrthoDB" id="25264at10239"/>
<dbReference type="Proteomes" id="UP000002270">
    <property type="component" value="Genome"/>
</dbReference>
<dbReference type="Proteomes" id="UP000223181">
    <property type="component" value="Segment"/>
</dbReference>
<sequence>MITYYYDEKNKELHIKIYILIDQVPNKPTEEELKKVLPKILKDYANMIENGKMKLIDSKEWGIW</sequence>
<accession>Q8QL33</accession>
<accession>Q5TJ97</accession>
<protein>
    <recommendedName>
        <fullName>Uncharacterized protein 64</fullName>
    </recommendedName>
</protein>
<name>Y64_SIRV1</name>
<proteinExistence type="predicted"/>
<feature type="chain" id="PRO_0000342313" description="Uncharacterized protein 64">
    <location>
        <begin position="1"/>
        <end position="64"/>
    </location>
</feature>
<reference key="1">
    <citation type="journal article" date="2001" name="Virology">
        <title>Sequences and replication of genomes of the archaeal rudiviruses SIRV1 and SIRV2: relationships to the archaeal lipothrixvirus SIFV and some eukaryal viruses.</title>
        <authorList>
            <person name="Peng X."/>
            <person name="Blum H."/>
            <person name="She Q."/>
            <person name="Mallok S."/>
            <person name="Bruegger K."/>
            <person name="Garrett R.A."/>
            <person name="Zillig W."/>
            <person name="Prangishvili D."/>
        </authorList>
    </citation>
    <scope>NUCLEOTIDE SEQUENCE [LARGE SCALE GENOMIC DNA]</scope>
    <source>
        <strain>Isolate variant VIII</strain>
    </source>
</reference>
<reference key="2">
    <citation type="journal article" date="2004" name="Mol. Microbiol.">
        <title>Multiple variants of the archaeal DNA rudivirus SIRV1 in a single host and a novel mechanism of genomic variation.</title>
        <authorList>
            <person name="Peng X."/>
            <person name="Kessler A."/>
            <person name="Phan H."/>
            <person name="Garrett R.A."/>
            <person name="Prangishvili D."/>
        </authorList>
    </citation>
    <scope>NUCLEOTIDE SEQUENCE [LARGE SCALE GENOMIC DNA]</scope>
    <source>
        <strain>Isolate variant XX</strain>
    </source>
</reference>
<organism>
    <name type="scientific">Sulfolobus islandicus rod-shaped virus 1</name>
    <name type="common">SIRV-1</name>
    <name type="synonym">Sulfolobus virus SIRV-1</name>
    <dbReference type="NCBI Taxonomy" id="157898"/>
    <lineage>
        <taxon>Viruses</taxon>
        <taxon>Adnaviria</taxon>
        <taxon>Zilligvirae</taxon>
        <taxon>Taleaviricota</taxon>
        <taxon>Tokiviricetes</taxon>
        <taxon>Ligamenvirales</taxon>
        <taxon>Rudiviridae</taxon>
        <taxon>Icerudivirus</taxon>
        <taxon>Icerudivirus SIRV1</taxon>
    </lineage>
</organism>
<organismHost>
    <name type="scientific">Saccharolobus islandicus</name>
    <name type="common">Sulfolobus islandicus</name>
    <dbReference type="NCBI Taxonomy" id="43080"/>
</organismHost>
<keyword id="KW-1185">Reference proteome</keyword>